<feature type="initiator methionine" description="Removed" evidence="1">
    <location>
        <position position="1"/>
    </location>
</feature>
<feature type="chain" id="PRO_0000340016" description="Photosystem II protein D1" evidence="1">
    <location>
        <begin position="2"/>
        <end position="344"/>
    </location>
</feature>
<feature type="propeptide" id="PRO_0000340017" evidence="1">
    <location>
        <begin position="345"/>
        <end position="353"/>
    </location>
</feature>
<feature type="transmembrane region" description="Helical" evidence="1">
    <location>
        <begin position="29"/>
        <end position="46"/>
    </location>
</feature>
<feature type="transmembrane region" description="Helical" evidence="1">
    <location>
        <begin position="118"/>
        <end position="133"/>
    </location>
</feature>
<feature type="transmembrane region" description="Helical" evidence="1">
    <location>
        <begin position="142"/>
        <end position="156"/>
    </location>
</feature>
<feature type="transmembrane region" description="Helical" evidence="1">
    <location>
        <begin position="197"/>
        <end position="218"/>
    </location>
</feature>
<feature type="transmembrane region" description="Helical" evidence="1">
    <location>
        <begin position="274"/>
        <end position="288"/>
    </location>
</feature>
<feature type="binding site" description="axial binding residue" evidence="1">
    <location>
        <position position="118"/>
    </location>
    <ligand>
        <name>chlorophyll a</name>
        <dbReference type="ChEBI" id="CHEBI:58416"/>
        <label>ChlzD1</label>
    </ligand>
    <ligandPart>
        <name>Mg</name>
        <dbReference type="ChEBI" id="CHEBI:25107"/>
    </ligandPart>
</feature>
<feature type="binding site" evidence="1">
    <location>
        <position position="126"/>
    </location>
    <ligand>
        <name>pheophytin a</name>
        <dbReference type="ChEBI" id="CHEBI:136840"/>
        <label>D1</label>
    </ligand>
</feature>
<feature type="binding site" evidence="1">
    <location>
        <position position="170"/>
    </location>
    <ligand>
        <name>[CaMn4O5] cluster</name>
        <dbReference type="ChEBI" id="CHEBI:189552"/>
    </ligand>
</feature>
<feature type="binding site" evidence="1">
    <location>
        <position position="189"/>
    </location>
    <ligand>
        <name>[CaMn4O5] cluster</name>
        <dbReference type="ChEBI" id="CHEBI:189552"/>
    </ligand>
</feature>
<feature type="binding site" description="axial binding residue" evidence="1">
    <location>
        <position position="198"/>
    </location>
    <ligand>
        <name>chlorophyll a</name>
        <dbReference type="ChEBI" id="CHEBI:58416"/>
        <label>PD1</label>
    </ligand>
    <ligandPart>
        <name>Mg</name>
        <dbReference type="ChEBI" id="CHEBI:25107"/>
    </ligandPart>
</feature>
<feature type="binding site" evidence="1">
    <location>
        <position position="215"/>
    </location>
    <ligand>
        <name>a quinone</name>
        <dbReference type="ChEBI" id="CHEBI:132124"/>
        <label>B</label>
    </ligand>
</feature>
<feature type="binding site" evidence="1">
    <location>
        <position position="215"/>
    </location>
    <ligand>
        <name>Fe cation</name>
        <dbReference type="ChEBI" id="CHEBI:24875"/>
        <note>ligand shared with heterodimeric partner</note>
    </ligand>
</feature>
<feature type="binding site" evidence="1">
    <location>
        <begin position="264"/>
        <end position="265"/>
    </location>
    <ligand>
        <name>a quinone</name>
        <dbReference type="ChEBI" id="CHEBI:132124"/>
        <label>B</label>
    </ligand>
</feature>
<feature type="binding site" evidence="1">
    <location>
        <position position="272"/>
    </location>
    <ligand>
        <name>Fe cation</name>
        <dbReference type="ChEBI" id="CHEBI:24875"/>
        <note>ligand shared with heterodimeric partner</note>
    </ligand>
</feature>
<feature type="binding site" evidence="1">
    <location>
        <position position="332"/>
    </location>
    <ligand>
        <name>[CaMn4O5] cluster</name>
        <dbReference type="ChEBI" id="CHEBI:189552"/>
    </ligand>
</feature>
<feature type="binding site" evidence="1">
    <location>
        <position position="333"/>
    </location>
    <ligand>
        <name>[CaMn4O5] cluster</name>
        <dbReference type="ChEBI" id="CHEBI:189552"/>
    </ligand>
</feature>
<feature type="binding site" evidence="1">
    <location>
        <position position="342"/>
    </location>
    <ligand>
        <name>[CaMn4O5] cluster</name>
        <dbReference type="ChEBI" id="CHEBI:189552"/>
    </ligand>
</feature>
<feature type="binding site" evidence="1">
    <location>
        <position position="344"/>
    </location>
    <ligand>
        <name>[CaMn4O5] cluster</name>
        <dbReference type="ChEBI" id="CHEBI:189552"/>
    </ligand>
</feature>
<feature type="site" description="Tyrosine radical intermediate" evidence="1">
    <location>
        <position position="161"/>
    </location>
</feature>
<feature type="site" description="Stabilizes free radical intermediate" evidence="1">
    <location>
        <position position="190"/>
    </location>
</feature>
<feature type="site" description="Cleavage; by CTPA" evidence="1">
    <location>
        <begin position="344"/>
        <end position="345"/>
    </location>
</feature>
<feature type="modified residue" description="N-acetylthreonine" evidence="1">
    <location>
        <position position="2"/>
    </location>
</feature>
<feature type="modified residue" description="Phosphothreonine" evidence="1">
    <location>
        <position position="2"/>
    </location>
</feature>
<evidence type="ECO:0000255" key="1">
    <source>
        <dbReference type="HAMAP-Rule" id="MF_01379"/>
    </source>
</evidence>
<dbReference type="EC" id="1.10.3.9" evidence="1"/>
<dbReference type="EMBL" id="AM777385">
    <property type="protein sequence ID" value="CAO85956.1"/>
    <property type="molecule type" value="Genomic_DNA"/>
</dbReference>
<dbReference type="RefSeq" id="YP_001531263.1">
    <property type="nucleotide sequence ID" value="NC_009950.1"/>
</dbReference>
<dbReference type="SMR" id="A8Y9F0"/>
<dbReference type="GeneID" id="5696584"/>
<dbReference type="KEGG" id="lper:5696584"/>
<dbReference type="GO" id="GO:0009535">
    <property type="term" value="C:chloroplast thylakoid membrane"/>
    <property type="evidence" value="ECO:0007669"/>
    <property type="project" value="UniProtKB-SubCell"/>
</dbReference>
<dbReference type="GO" id="GO:0009523">
    <property type="term" value="C:photosystem II"/>
    <property type="evidence" value="ECO:0007669"/>
    <property type="project" value="UniProtKB-KW"/>
</dbReference>
<dbReference type="GO" id="GO:0016168">
    <property type="term" value="F:chlorophyll binding"/>
    <property type="evidence" value="ECO:0007669"/>
    <property type="project" value="UniProtKB-UniRule"/>
</dbReference>
<dbReference type="GO" id="GO:0045156">
    <property type="term" value="F:electron transporter, transferring electrons within the cyclic electron transport pathway of photosynthesis activity"/>
    <property type="evidence" value="ECO:0007669"/>
    <property type="project" value="InterPro"/>
</dbReference>
<dbReference type="GO" id="GO:0005506">
    <property type="term" value="F:iron ion binding"/>
    <property type="evidence" value="ECO:0007669"/>
    <property type="project" value="UniProtKB-UniRule"/>
</dbReference>
<dbReference type="GO" id="GO:0016682">
    <property type="term" value="F:oxidoreductase activity, acting on diphenols and related substances as donors, oxygen as acceptor"/>
    <property type="evidence" value="ECO:0007669"/>
    <property type="project" value="UniProtKB-UniRule"/>
</dbReference>
<dbReference type="GO" id="GO:0010242">
    <property type="term" value="F:oxygen evolving activity"/>
    <property type="evidence" value="ECO:0007669"/>
    <property type="project" value="UniProtKB-EC"/>
</dbReference>
<dbReference type="GO" id="GO:0009772">
    <property type="term" value="P:photosynthetic electron transport in photosystem II"/>
    <property type="evidence" value="ECO:0007669"/>
    <property type="project" value="InterPro"/>
</dbReference>
<dbReference type="GO" id="GO:0009635">
    <property type="term" value="P:response to herbicide"/>
    <property type="evidence" value="ECO:0007669"/>
    <property type="project" value="UniProtKB-KW"/>
</dbReference>
<dbReference type="CDD" id="cd09289">
    <property type="entry name" value="Photosystem-II_D1"/>
    <property type="match status" value="1"/>
</dbReference>
<dbReference type="FunFam" id="1.20.85.10:FF:000002">
    <property type="entry name" value="Photosystem II protein D1"/>
    <property type="match status" value="1"/>
</dbReference>
<dbReference type="Gene3D" id="1.20.85.10">
    <property type="entry name" value="Photosystem II protein D1-like"/>
    <property type="match status" value="1"/>
</dbReference>
<dbReference type="HAMAP" id="MF_01379">
    <property type="entry name" value="PSII_PsbA_D1"/>
    <property type="match status" value="1"/>
</dbReference>
<dbReference type="InterPro" id="IPR055266">
    <property type="entry name" value="D1/D2"/>
</dbReference>
<dbReference type="InterPro" id="IPR036854">
    <property type="entry name" value="Photo_II_D1/D2_sf"/>
</dbReference>
<dbReference type="InterPro" id="IPR000484">
    <property type="entry name" value="Photo_RC_L/M"/>
</dbReference>
<dbReference type="InterPro" id="IPR055265">
    <property type="entry name" value="Photo_RC_L/M_CS"/>
</dbReference>
<dbReference type="InterPro" id="IPR005867">
    <property type="entry name" value="PSII_D1"/>
</dbReference>
<dbReference type="NCBIfam" id="TIGR01151">
    <property type="entry name" value="psbA"/>
    <property type="match status" value="1"/>
</dbReference>
<dbReference type="PANTHER" id="PTHR33149">
    <property type="entry name" value="PHOTOSYSTEM II PROTEIN D1"/>
    <property type="match status" value="1"/>
</dbReference>
<dbReference type="PANTHER" id="PTHR33149:SF58">
    <property type="entry name" value="PHOTOSYSTEM II PROTEIN D1"/>
    <property type="match status" value="1"/>
</dbReference>
<dbReference type="Pfam" id="PF00124">
    <property type="entry name" value="Photo_RC"/>
    <property type="match status" value="1"/>
</dbReference>
<dbReference type="PRINTS" id="PR00256">
    <property type="entry name" value="REACTNCENTRE"/>
</dbReference>
<dbReference type="SUPFAM" id="SSF81483">
    <property type="entry name" value="Bacterial photosystem II reaction centre, L and M subunits"/>
    <property type="match status" value="1"/>
</dbReference>
<dbReference type="PROSITE" id="PS00244">
    <property type="entry name" value="REACTION_CENTER"/>
    <property type="match status" value="1"/>
</dbReference>
<proteinExistence type="inferred from homology"/>
<name>PSBA_LOLPR</name>
<reference key="1">
    <citation type="journal article" date="2008" name="PLoS ONE">
        <title>An optimized chloroplast DNA extraction protocol for grasses (Poaceae) proves suitable for whole plastid genome sequencing and SNP detection.</title>
        <authorList>
            <person name="Diekmann K."/>
            <person name="Hodkinson T.R."/>
            <person name="Fricke E."/>
            <person name="Barth S."/>
        </authorList>
    </citation>
    <scope>NUCLEOTIDE SEQUENCE [LARGE SCALE GENOMIC DNA]</scope>
    <source>
        <strain>cv. Cashel</strain>
    </source>
</reference>
<protein>
    <recommendedName>
        <fullName evidence="1">Photosystem II protein D1</fullName>
        <shortName evidence="1">PSII D1 protein</shortName>
        <ecNumber evidence="1">1.10.3.9</ecNumber>
    </recommendedName>
    <alternativeName>
        <fullName evidence="1">Photosystem II Q(B) protein</fullName>
    </alternativeName>
</protein>
<geneLocation type="chloroplast"/>
<comment type="function">
    <text evidence="1">Photosystem II (PSII) is a light-driven water:plastoquinone oxidoreductase that uses light energy to abstract electrons from H(2)O, generating O(2) and a proton gradient subsequently used for ATP formation. It consists of a core antenna complex that captures photons, and an electron transfer chain that converts photonic excitation into a charge separation. The D1/D2 (PsbA/PsbD) reaction center heterodimer binds P680, the primary electron donor of PSII as well as several subsequent electron acceptors.</text>
</comment>
<comment type="catalytic activity">
    <reaction evidence="1">
        <text>2 a plastoquinone + 4 hnu + 2 H2O = 2 a plastoquinol + O2</text>
        <dbReference type="Rhea" id="RHEA:36359"/>
        <dbReference type="Rhea" id="RHEA-COMP:9561"/>
        <dbReference type="Rhea" id="RHEA-COMP:9562"/>
        <dbReference type="ChEBI" id="CHEBI:15377"/>
        <dbReference type="ChEBI" id="CHEBI:15379"/>
        <dbReference type="ChEBI" id="CHEBI:17757"/>
        <dbReference type="ChEBI" id="CHEBI:30212"/>
        <dbReference type="ChEBI" id="CHEBI:62192"/>
        <dbReference type="EC" id="1.10.3.9"/>
    </reaction>
</comment>
<comment type="cofactor">
    <text evidence="1">The D1/D2 heterodimer binds P680, chlorophylls that are the primary electron donor of PSII, and subsequent electron acceptors. It shares a non-heme iron and each subunit binds pheophytin, quinone, additional chlorophylls, carotenoids and lipids. D1 provides most of the ligands for the Mn4-Ca-O5 cluster of the oxygen-evolving complex (OEC). There is also a Cl(-1) ion associated with D1 and D2, which is required for oxygen evolution. The PSII complex binds additional chlorophylls, carotenoids and specific lipids.</text>
</comment>
<comment type="subunit">
    <text evidence="1">PSII is composed of 1 copy each of membrane proteins PsbA, PsbB, PsbC, PsbD, PsbE, PsbF, PsbH, PsbI, PsbJ, PsbK, PsbL, PsbM, PsbT, PsbX, PsbY, PsbZ, Psb30/Ycf12, at least 3 peripheral proteins of the oxygen-evolving complex and a large number of cofactors. It forms dimeric complexes.</text>
</comment>
<comment type="subcellular location">
    <subcellularLocation>
        <location evidence="1">Plastid</location>
        <location evidence="1">Chloroplast thylakoid membrane</location>
        <topology evidence="1">Multi-pass membrane protein</topology>
    </subcellularLocation>
</comment>
<comment type="PTM">
    <text evidence="1">Tyr-161 forms a radical intermediate that is referred to as redox-active TyrZ, YZ or Y-Z.</text>
</comment>
<comment type="PTM">
    <text evidence="1">C-terminally processed by CTPA; processing is essential to allow assembly of the oxygen-evolving complex and thus photosynthetic growth.</text>
</comment>
<comment type="miscellaneous">
    <text evidence="1">2 of the reaction center chlorophylls (ChlD1 and ChlD2) are entirely coordinated by water.</text>
</comment>
<comment type="miscellaneous">
    <text evidence="1">Herbicides such as atrazine, BNT, diuron or ioxynil bind in the Q(B) binding site and block subsequent electron transfer.</text>
</comment>
<comment type="similarity">
    <text evidence="1">Belongs to the reaction center PufL/M/PsbA/D family.</text>
</comment>
<gene>
    <name evidence="1" type="primary">psbA</name>
    <name type="ordered locus">LopeCp001</name>
</gene>
<accession>A8Y9F0</accession>
<sequence>MTAILERRESTSLWGRFCNWITSTENRLYIGWFGVLMIPTLLTATSVFIIAFIAAPPVDIDGIREPVSGSLLYGNNIISGAIIPTSAAIGLHFYPIWEAASVDEWLYNGGPYELIVLHFLLGVACYMGREWELSFRLGMRPWIAVAYSAPVAAATAVFLIYPIGQGSFSDGMPLGISGTFNFMIVFQAEHNILMHPFHMLGVAGVFGGSLFSAMHGSLVTSSLIRETTENESANEGYKFGQEEETYNIVAAHGYFGRLIFQYASFNNSRSLHFFLAAWPVVGIWFTALGISTMAFNLNGFNFNQSVVDSQGRVINTWADIINRANLGMEVMHERNAHNFPLDLAALEVPSLNG</sequence>
<organism>
    <name type="scientific">Lolium perenne</name>
    <name type="common">Perennial ryegrass</name>
    <dbReference type="NCBI Taxonomy" id="4522"/>
    <lineage>
        <taxon>Eukaryota</taxon>
        <taxon>Viridiplantae</taxon>
        <taxon>Streptophyta</taxon>
        <taxon>Embryophyta</taxon>
        <taxon>Tracheophyta</taxon>
        <taxon>Spermatophyta</taxon>
        <taxon>Magnoliopsida</taxon>
        <taxon>Liliopsida</taxon>
        <taxon>Poales</taxon>
        <taxon>Poaceae</taxon>
        <taxon>BOP clade</taxon>
        <taxon>Pooideae</taxon>
        <taxon>Poodae</taxon>
        <taxon>Poeae</taxon>
        <taxon>Poeae Chloroplast Group 2 (Poeae type)</taxon>
        <taxon>Loliodinae</taxon>
        <taxon>Loliinae</taxon>
        <taxon>Lolium</taxon>
    </lineage>
</organism>
<keyword id="KW-0007">Acetylation</keyword>
<keyword id="KW-0106">Calcium</keyword>
<keyword id="KW-0148">Chlorophyll</keyword>
<keyword id="KW-0150">Chloroplast</keyword>
<keyword id="KW-0157">Chromophore</keyword>
<keyword id="KW-0249">Electron transport</keyword>
<keyword id="KW-0359">Herbicide resistance</keyword>
<keyword id="KW-0408">Iron</keyword>
<keyword id="KW-0460">Magnesium</keyword>
<keyword id="KW-0464">Manganese</keyword>
<keyword id="KW-0472">Membrane</keyword>
<keyword id="KW-0479">Metal-binding</keyword>
<keyword id="KW-0560">Oxidoreductase</keyword>
<keyword id="KW-0597">Phosphoprotein</keyword>
<keyword id="KW-0602">Photosynthesis</keyword>
<keyword id="KW-0604">Photosystem II</keyword>
<keyword id="KW-0934">Plastid</keyword>
<keyword id="KW-0793">Thylakoid</keyword>
<keyword id="KW-0812">Transmembrane</keyword>
<keyword id="KW-1133">Transmembrane helix</keyword>
<keyword id="KW-0813">Transport</keyword>